<accession>Q5HDD3</accession>
<protein>
    <recommendedName>
        <fullName>Gamma-hemolysin component B</fullName>
    </recommendedName>
    <alternativeName>
        <fullName>H-gamma-1</fullName>
    </alternativeName>
    <alternativeName>
        <fullName>H-gamma-I</fullName>
    </alternativeName>
</protein>
<keyword id="KW-0204">Cytolysis</keyword>
<keyword id="KW-0354">Hemolysis</keyword>
<keyword id="KW-0732">Signal</keyword>
<keyword id="KW-0800">Toxin</keyword>
<keyword id="KW-0843">Virulence</keyword>
<gene>
    <name type="primary">hlgB</name>
    <name type="ordered locus">SACOL2422</name>
</gene>
<name>HLGB_STAAC</name>
<comment type="function">
    <text evidence="2">Toxin that seems to act by forming pores in the membrane of the cell. Has a hemolytic and a leucotoxic activity. Promotes host AMFR-mediated inflammation by mediating 'Lys-27'-linked ubiquitination of TAB3, TAK1-TAB3 complex formation and phosphorylation of TAK1/MAP3K7. In turn, activates host NF-kappa-B signaling pathway.</text>
</comment>
<comment type="subunit">
    <text evidence="1 2">Toxicity requires sequential binding and synergistic association of a class S and a class F component which form heterooligomeric complexes. HlgB (class F) associates with either hlgA thus forming an AB toxin or with hlgC thus forming a CB toxin (By similarity). Interacts with host AMFR (By similarity).</text>
</comment>
<comment type="similarity">
    <text evidence="4">Belongs to the aerolysin family.</text>
</comment>
<reference key="1">
    <citation type="journal article" date="2005" name="J. Bacteriol.">
        <title>Insights on evolution of virulence and resistance from the complete genome analysis of an early methicillin-resistant Staphylococcus aureus strain and a biofilm-producing methicillin-resistant Staphylococcus epidermidis strain.</title>
        <authorList>
            <person name="Gill S.R."/>
            <person name="Fouts D.E."/>
            <person name="Archer G.L."/>
            <person name="Mongodin E.F."/>
            <person name="DeBoy R.T."/>
            <person name="Ravel J."/>
            <person name="Paulsen I.T."/>
            <person name="Kolonay J.F."/>
            <person name="Brinkac L.M."/>
            <person name="Beanan M.J."/>
            <person name="Dodson R.J."/>
            <person name="Daugherty S.C."/>
            <person name="Madupu R."/>
            <person name="Angiuoli S.V."/>
            <person name="Durkin A.S."/>
            <person name="Haft D.H."/>
            <person name="Vamathevan J.J."/>
            <person name="Khouri H."/>
            <person name="Utterback T.R."/>
            <person name="Lee C."/>
            <person name="Dimitrov G."/>
            <person name="Jiang L."/>
            <person name="Qin H."/>
            <person name="Weidman J."/>
            <person name="Tran K."/>
            <person name="Kang K.H."/>
            <person name="Hance I.R."/>
            <person name="Nelson K.E."/>
            <person name="Fraser C.M."/>
        </authorList>
    </citation>
    <scope>NUCLEOTIDE SEQUENCE [LARGE SCALE GENOMIC DNA]</scope>
    <source>
        <strain>COL</strain>
    </source>
</reference>
<evidence type="ECO:0000250" key="1"/>
<evidence type="ECO:0000250" key="2">
    <source>
        <dbReference type="UniProtKB" id="Q2FVK1"/>
    </source>
</evidence>
<evidence type="ECO:0000255" key="3"/>
<evidence type="ECO:0000305" key="4"/>
<organism>
    <name type="scientific">Staphylococcus aureus (strain COL)</name>
    <dbReference type="NCBI Taxonomy" id="93062"/>
    <lineage>
        <taxon>Bacteria</taxon>
        <taxon>Bacillati</taxon>
        <taxon>Bacillota</taxon>
        <taxon>Bacilli</taxon>
        <taxon>Bacillales</taxon>
        <taxon>Staphylococcaceae</taxon>
        <taxon>Staphylococcus</taxon>
    </lineage>
</organism>
<proteinExistence type="inferred from homology"/>
<feature type="signal peptide" evidence="3">
    <location>
        <begin position="1"/>
        <end position="25"/>
    </location>
</feature>
<feature type="chain" id="PRO_0000045217" description="Gamma-hemolysin component B">
    <location>
        <begin position="26"/>
        <end position="325"/>
    </location>
</feature>
<sequence>MKMNKLVKSSVATSMALLLLSGTANAEGKITPVSVKKVDDKVTLYKTTATADSDKFKISQILTFNFIKDKSYDKDTLVLKATGNINSGFVKPNPNDYDFSKLYWGAKYNVSISSQSNDSVNVVDYAPKNQNEEFQVQNTLGYTFGGDISISNGLSGGLNGNTAFSETINYKQESYRTTLSRNTNYKNVGWGVEAHKIMNNGWGPYGRDSFHPTYGNELFLAGRQSSAYAGQNFIAQHQMPLLSRSNFNPEFLSVLSHRQDGAKKSKITVTYQREMDLYQIRWNGFYWAGANYKNFKTRTFKSTYEIDWENHKVKLLDTKETENNK</sequence>
<dbReference type="EMBL" id="CP000046">
    <property type="protein sequence ID" value="AAW37246.1"/>
    <property type="molecule type" value="Genomic_DNA"/>
</dbReference>
<dbReference type="RefSeq" id="WP_000783428.1">
    <property type="nucleotide sequence ID" value="NZ_JBGOFO010000004.1"/>
</dbReference>
<dbReference type="SMR" id="Q5HDD3"/>
<dbReference type="KEGG" id="sac:SACOL2422"/>
<dbReference type="HOGENOM" id="CLU_055394_0_1_9"/>
<dbReference type="Proteomes" id="UP000000530">
    <property type="component" value="Chromosome"/>
</dbReference>
<dbReference type="GO" id="GO:0005576">
    <property type="term" value="C:extracellular region"/>
    <property type="evidence" value="ECO:0007669"/>
    <property type="project" value="InterPro"/>
</dbReference>
<dbReference type="GO" id="GO:0090729">
    <property type="term" value="F:toxin activity"/>
    <property type="evidence" value="ECO:0007669"/>
    <property type="project" value="UniProtKB-KW"/>
</dbReference>
<dbReference type="GO" id="GO:0051715">
    <property type="term" value="P:cytolysis in another organism"/>
    <property type="evidence" value="ECO:0007669"/>
    <property type="project" value="InterPro"/>
</dbReference>
<dbReference type="Gene3D" id="2.70.240.10">
    <property type="entry name" value="Leukocidin/porin MspA"/>
    <property type="match status" value="1"/>
</dbReference>
<dbReference type="InterPro" id="IPR003963">
    <property type="entry name" value="Bi-component_toxin_staph"/>
</dbReference>
<dbReference type="InterPro" id="IPR016183">
    <property type="entry name" value="Leukocidin/Hemolysin_toxin"/>
</dbReference>
<dbReference type="InterPro" id="IPR036435">
    <property type="entry name" value="Leukocidin/porin_MspA_sf"/>
</dbReference>
<dbReference type="NCBIfam" id="TIGR01002">
    <property type="entry name" value="hlyII"/>
    <property type="match status" value="1"/>
</dbReference>
<dbReference type="Pfam" id="PF07968">
    <property type="entry name" value="Leukocidin"/>
    <property type="match status" value="1"/>
</dbReference>
<dbReference type="PRINTS" id="PR01468">
    <property type="entry name" value="BICOMPNTOXIN"/>
</dbReference>
<dbReference type="SUPFAM" id="SSF56959">
    <property type="entry name" value="Leukocidin-like"/>
    <property type="match status" value="1"/>
</dbReference>